<protein>
    <recommendedName>
        <fullName evidence="1">L-rhamnose-proton symporter</fullName>
    </recommendedName>
    <alternativeName>
        <fullName evidence="1">L-rhamnose-H(+) transport protein</fullName>
    </alternativeName>
</protein>
<organism>
    <name type="scientific">Escherichia coli O17:K52:H18 (strain UMN026 / ExPEC)</name>
    <dbReference type="NCBI Taxonomy" id="585056"/>
    <lineage>
        <taxon>Bacteria</taxon>
        <taxon>Pseudomonadati</taxon>
        <taxon>Pseudomonadota</taxon>
        <taxon>Gammaproteobacteria</taxon>
        <taxon>Enterobacterales</taxon>
        <taxon>Enterobacteriaceae</taxon>
        <taxon>Escherichia</taxon>
    </lineage>
</organism>
<evidence type="ECO:0000255" key="1">
    <source>
        <dbReference type="HAMAP-Rule" id="MF_01532"/>
    </source>
</evidence>
<sequence>MSNAITMGIFWHLIGAASAACFYAPFKKVKKWSWETMWSVGGIVSWIILPWAISALLLPNFWAYYSSFSLSTLLPVFLFGAMWGIGNINYGLTMRYLGMSMGIGIAIGITLIVGTLMTPIINGNFDVLINTEGGRMTLLGVLVALIGVGIVTRAGQLKERKMGIKAEEFNLKKGLVLAVMCGIFSAGMSFAMNAAKPMHEAAAALGVDPLYVALPSYVVIMGGGAIINLGFCFIRLAKVKDLSLKADFSLAKPLIFHNVLLSALGGLMWYLQFFFYAWGHARIPAQYDYISWMLHMSFYVLCGGIVGLVLKEWNNAGRRPVTVLSLGCVVIIVAANIVGMGMAN</sequence>
<dbReference type="EMBL" id="CU928163">
    <property type="protein sequence ID" value="CAR15562.1"/>
    <property type="molecule type" value="Genomic_DNA"/>
</dbReference>
<dbReference type="RefSeq" id="WP_000063505.1">
    <property type="nucleotide sequence ID" value="NC_011751.1"/>
</dbReference>
<dbReference type="RefSeq" id="YP_002415051.1">
    <property type="nucleotide sequence ID" value="NC_011751.1"/>
</dbReference>
<dbReference type="STRING" id="585056.ECUMN_4436"/>
<dbReference type="KEGG" id="eum:ECUMN_4436"/>
<dbReference type="PATRIC" id="fig|585056.7.peg.4605"/>
<dbReference type="HOGENOM" id="CLU_066437_0_0_6"/>
<dbReference type="Proteomes" id="UP000007097">
    <property type="component" value="Chromosome"/>
</dbReference>
<dbReference type="GO" id="GO:0005886">
    <property type="term" value="C:plasma membrane"/>
    <property type="evidence" value="ECO:0007669"/>
    <property type="project" value="UniProtKB-SubCell"/>
</dbReference>
<dbReference type="GO" id="GO:0015153">
    <property type="term" value="F:rhamnose transmembrane transporter activity"/>
    <property type="evidence" value="ECO:0007669"/>
    <property type="project" value="UniProtKB-UniRule"/>
</dbReference>
<dbReference type="GO" id="GO:0015293">
    <property type="term" value="F:symporter activity"/>
    <property type="evidence" value="ECO:0007669"/>
    <property type="project" value="UniProtKB-KW"/>
</dbReference>
<dbReference type="HAMAP" id="MF_01532">
    <property type="entry name" value="RhaT"/>
    <property type="match status" value="1"/>
</dbReference>
<dbReference type="InterPro" id="IPR004673">
    <property type="entry name" value="L-rhamnose-proton_sym_RhaT"/>
</dbReference>
<dbReference type="NCBIfam" id="NF010021">
    <property type="entry name" value="PRK13499.1-1"/>
    <property type="match status" value="1"/>
</dbReference>
<dbReference type="NCBIfam" id="NF010023">
    <property type="entry name" value="PRK13499.1-3"/>
    <property type="match status" value="1"/>
</dbReference>
<dbReference type="NCBIfam" id="TIGR00776">
    <property type="entry name" value="RhaT"/>
    <property type="match status" value="1"/>
</dbReference>
<dbReference type="Pfam" id="PF06379">
    <property type="entry name" value="RhaT"/>
    <property type="match status" value="1"/>
</dbReference>
<reference key="1">
    <citation type="journal article" date="2009" name="PLoS Genet.">
        <title>Organised genome dynamics in the Escherichia coli species results in highly diverse adaptive paths.</title>
        <authorList>
            <person name="Touchon M."/>
            <person name="Hoede C."/>
            <person name="Tenaillon O."/>
            <person name="Barbe V."/>
            <person name="Baeriswyl S."/>
            <person name="Bidet P."/>
            <person name="Bingen E."/>
            <person name="Bonacorsi S."/>
            <person name="Bouchier C."/>
            <person name="Bouvet O."/>
            <person name="Calteau A."/>
            <person name="Chiapello H."/>
            <person name="Clermont O."/>
            <person name="Cruveiller S."/>
            <person name="Danchin A."/>
            <person name="Diard M."/>
            <person name="Dossat C."/>
            <person name="Karoui M.E."/>
            <person name="Frapy E."/>
            <person name="Garry L."/>
            <person name="Ghigo J.M."/>
            <person name="Gilles A.M."/>
            <person name="Johnson J."/>
            <person name="Le Bouguenec C."/>
            <person name="Lescat M."/>
            <person name="Mangenot S."/>
            <person name="Martinez-Jehanne V."/>
            <person name="Matic I."/>
            <person name="Nassif X."/>
            <person name="Oztas S."/>
            <person name="Petit M.A."/>
            <person name="Pichon C."/>
            <person name="Rouy Z."/>
            <person name="Ruf C.S."/>
            <person name="Schneider D."/>
            <person name="Tourret J."/>
            <person name="Vacherie B."/>
            <person name="Vallenet D."/>
            <person name="Medigue C."/>
            <person name="Rocha E.P.C."/>
            <person name="Denamur E."/>
        </authorList>
    </citation>
    <scope>NUCLEOTIDE SEQUENCE [LARGE SCALE GENOMIC DNA]</scope>
    <source>
        <strain>UMN026 / ExPEC</strain>
    </source>
</reference>
<accession>B7NFK5</accession>
<feature type="chain" id="PRO_1000193745" description="L-rhamnose-proton symporter">
    <location>
        <begin position="1"/>
        <end position="344"/>
    </location>
</feature>
<feature type="transmembrane region" description="Helical" evidence="1">
    <location>
        <begin position="4"/>
        <end position="24"/>
    </location>
</feature>
<feature type="transmembrane region" description="Helical" evidence="1">
    <location>
        <begin position="38"/>
        <end position="58"/>
    </location>
</feature>
<feature type="transmembrane region" description="Helical" evidence="1">
    <location>
        <begin position="68"/>
        <end position="88"/>
    </location>
</feature>
<feature type="transmembrane region" description="Helical" evidence="1">
    <location>
        <begin position="101"/>
        <end position="121"/>
    </location>
</feature>
<feature type="transmembrane region" description="Helical" evidence="1">
    <location>
        <begin position="137"/>
        <end position="157"/>
    </location>
</feature>
<feature type="transmembrane region" description="Helical" evidence="1">
    <location>
        <begin position="175"/>
        <end position="195"/>
    </location>
</feature>
<feature type="transmembrane region" description="Helical" evidence="1">
    <location>
        <begin position="214"/>
        <end position="234"/>
    </location>
</feature>
<feature type="transmembrane region" description="Helical" evidence="1">
    <location>
        <begin position="259"/>
        <end position="279"/>
    </location>
</feature>
<feature type="transmembrane region" description="Helical" evidence="1">
    <location>
        <begin position="290"/>
        <end position="310"/>
    </location>
</feature>
<feature type="transmembrane region" description="Helical" evidence="1">
    <location>
        <begin position="323"/>
        <end position="343"/>
    </location>
</feature>
<proteinExistence type="inferred from homology"/>
<gene>
    <name evidence="1" type="primary">rhaT</name>
    <name type="ordered locus">ECUMN_4436</name>
</gene>
<keyword id="KW-0997">Cell inner membrane</keyword>
<keyword id="KW-1003">Cell membrane</keyword>
<keyword id="KW-0472">Membrane</keyword>
<keyword id="KW-0762">Sugar transport</keyword>
<keyword id="KW-0769">Symport</keyword>
<keyword id="KW-0812">Transmembrane</keyword>
<keyword id="KW-1133">Transmembrane helix</keyword>
<keyword id="KW-0813">Transport</keyword>
<name>RHAT_ECOLU</name>
<comment type="function">
    <text evidence="1">Uptake of L-rhamnose across the cytoplasmic membrane with the concomitant transport of protons into the cell (symport system).</text>
</comment>
<comment type="catalytic activity">
    <reaction evidence="1">
        <text>L-rhamnopyranose(in) + H(+)(in) = L-rhamnopyranose(out) + H(+)(out)</text>
        <dbReference type="Rhea" id="RHEA:29947"/>
        <dbReference type="ChEBI" id="CHEBI:15378"/>
        <dbReference type="ChEBI" id="CHEBI:62346"/>
    </reaction>
    <physiologicalReaction direction="right-to-left" evidence="1">
        <dbReference type="Rhea" id="RHEA:29949"/>
    </physiologicalReaction>
</comment>
<comment type="subcellular location">
    <subcellularLocation>
        <location evidence="1">Cell inner membrane</location>
        <topology evidence="1">Multi-pass membrane protein</topology>
    </subcellularLocation>
</comment>
<comment type="similarity">
    <text evidence="1">Belongs to the L-rhamnose transporter (TC 2.A.7.6) family.</text>
</comment>